<dbReference type="EC" id="1.1.1.290" evidence="1"/>
<dbReference type="EMBL" id="CP000488">
    <property type="protein sequence ID" value="ABL02424.1"/>
    <property type="molecule type" value="Genomic_DNA"/>
</dbReference>
<dbReference type="RefSeq" id="WP_011738049.1">
    <property type="nucleotide sequence ID" value="NC_008610.1"/>
</dbReference>
<dbReference type="SMR" id="A1AWW7"/>
<dbReference type="STRING" id="413404.Rmag_0684"/>
<dbReference type="KEGG" id="rma:Rmag_0684"/>
<dbReference type="eggNOG" id="COG0111">
    <property type="taxonomic scope" value="Bacteria"/>
</dbReference>
<dbReference type="HOGENOM" id="CLU_019796_4_0_6"/>
<dbReference type="OrthoDB" id="9770208at2"/>
<dbReference type="UniPathway" id="UPA00244">
    <property type="reaction ID" value="UER00310"/>
</dbReference>
<dbReference type="Proteomes" id="UP000002587">
    <property type="component" value="Chromosome"/>
</dbReference>
<dbReference type="GO" id="GO:0005737">
    <property type="term" value="C:cytoplasm"/>
    <property type="evidence" value="ECO:0007669"/>
    <property type="project" value="UniProtKB-SubCell"/>
</dbReference>
<dbReference type="GO" id="GO:0033711">
    <property type="term" value="F:4-phosphoerythronate dehydrogenase activity"/>
    <property type="evidence" value="ECO:0007669"/>
    <property type="project" value="UniProtKB-EC"/>
</dbReference>
<dbReference type="GO" id="GO:0051287">
    <property type="term" value="F:NAD binding"/>
    <property type="evidence" value="ECO:0007669"/>
    <property type="project" value="InterPro"/>
</dbReference>
<dbReference type="GO" id="GO:0008615">
    <property type="term" value="P:pyridoxine biosynthetic process"/>
    <property type="evidence" value="ECO:0007669"/>
    <property type="project" value="UniProtKB-UniRule"/>
</dbReference>
<dbReference type="CDD" id="cd12158">
    <property type="entry name" value="ErythrP_dh"/>
    <property type="match status" value="1"/>
</dbReference>
<dbReference type="Gene3D" id="3.30.1370.170">
    <property type="match status" value="1"/>
</dbReference>
<dbReference type="Gene3D" id="3.40.50.720">
    <property type="entry name" value="NAD(P)-binding Rossmann-like Domain"/>
    <property type="match status" value="2"/>
</dbReference>
<dbReference type="HAMAP" id="MF_01825">
    <property type="entry name" value="PdxB"/>
    <property type="match status" value="1"/>
</dbReference>
<dbReference type="InterPro" id="IPR050418">
    <property type="entry name" value="D-iso_2-hydroxyacid_DH_PdxB"/>
</dbReference>
<dbReference type="InterPro" id="IPR006139">
    <property type="entry name" value="D-isomer_2_OHA_DH_cat_dom"/>
</dbReference>
<dbReference type="InterPro" id="IPR006140">
    <property type="entry name" value="D-isomer_DH_NAD-bd"/>
</dbReference>
<dbReference type="InterPro" id="IPR020921">
    <property type="entry name" value="Erythronate-4-P_DHase"/>
</dbReference>
<dbReference type="InterPro" id="IPR036291">
    <property type="entry name" value="NAD(P)-bd_dom_sf"/>
</dbReference>
<dbReference type="InterPro" id="IPR038251">
    <property type="entry name" value="PdxB_dimer_sf"/>
</dbReference>
<dbReference type="PANTHER" id="PTHR43761:SF1">
    <property type="entry name" value="D-ISOMER SPECIFIC 2-HYDROXYACID DEHYDROGENASE CATALYTIC DOMAIN-CONTAINING PROTEIN-RELATED"/>
    <property type="match status" value="1"/>
</dbReference>
<dbReference type="PANTHER" id="PTHR43761">
    <property type="entry name" value="D-ISOMER SPECIFIC 2-HYDROXYACID DEHYDROGENASE FAMILY PROTEIN (AFU_ORTHOLOGUE AFUA_1G13630)"/>
    <property type="match status" value="1"/>
</dbReference>
<dbReference type="Pfam" id="PF00389">
    <property type="entry name" value="2-Hacid_dh"/>
    <property type="match status" value="1"/>
</dbReference>
<dbReference type="Pfam" id="PF02826">
    <property type="entry name" value="2-Hacid_dh_C"/>
    <property type="match status" value="1"/>
</dbReference>
<dbReference type="SUPFAM" id="SSF52283">
    <property type="entry name" value="Formate/glycerate dehydrogenase catalytic domain-like"/>
    <property type="match status" value="1"/>
</dbReference>
<dbReference type="SUPFAM" id="SSF51735">
    <property type="entry name" value="NAD(P)-binding Rossmann-fold domains"/>
    <property type="match status" value="1"/>
</dbReference>
<feature type="chain" id="PRO_0000297460" description="Erythronate-4-phosphate dehydrogenase">
    <location>
        <begin position="1"/>
        <end position="345"/>
    </location>
</feature>
<feature type="active site" evidence="1">
    <location>
        <position position="207"/>
    </location>
</feature>
<feature type="active site" evidence="1">
    <location>
        <position position="232"/>
    </location>
</feature>
<feature type="active site" description="Proton donor" evidence="1">
    <location>
        <position position="249"/>
    </location>
</feature>
<feature type="binding site" evidence="1">
    <location>
        <position position="45"/>
    </location>
    <ligand>
        <name>substrate</name>
    </ligand>
</feature>
<feature type="binding site" evidence="1">
    <location>
        <position position="146"/>
    </location>
    <ligand>
        <name>NAD(+)</name>
        <dbReference type="ChEBI" id="CHEBI:57540"/>
    </ligand>
</feature>
<feature type="binding site" evidence="1">
    <location>
        <position position="174"/>
    </location>
    <ligand>
        <name>NAD(+)</name>
        <dbReference type="ChEBI" id="CHEBI:57540"/>
    </ligand>
</feature>
<feature type="binding site" evidence="1">
    <location>
        <position position="227"/>
    </location>
    <ligand>
        <name>NAD(+)</name>
        <dbReference type="ChEBI" id="CHEBI:57540"/>
    </ligand>
</feature>
<feature type="binding site" evidence="1">
    <location>
        <position position="252"/>
    </location>
    <ligand>
        <name>NAD(+)</name>
        <dbReference type="ChEBI" id="CHEBI:57540"/>
    </ligand>
</feature>
<sequence>MKLVIDDACYAYREIFDHFGEITAISGSDINANSVKDADVLIIRSRTKVNQELLSGSQVKFIGSTVVGLDHIDQNYLKTKGTQFFSAQSCNSMAVAEFVISTIVNLVDELNFDYQKKTLGIIGVGNVGTKLAEKAKLMGIKTLLNDPPRQIRENLDNFVDLNTALSADIVTFHTPLTVNGEHPSYQLLNENNFHHITNKTILFNAARGGVIKETIWKKHKTLANIIDCWEDEPNINPSLQNTAYLATPHIAGHSVDAKFMGSFMVYEALCTFLGKKQDKNIRNLINLSELSIDKSNLKDTLNEIYDFQQDANAIKDVNNFEDYRRNYPIRYEWHHFKSKTVLPIA</sequence>
<organism>
    <name type="scientific">Ruthia magnifica subsp. Calyptogena magnifica</name>
    <dbReference type="NCBI Taxonomy" id="413404"/>
    <lineage>
        <taxon>Bacteria</taxon>
        <taxon>Pseudomonadati</taxon>
        <taxon>Pseudomonadota</taxon>
        <taxon>Gammaproteobacteria</taxon>
        <taxon>Candidatus Pseudothioglobaceae</taxon>
        <taxon>Candidatus Ruthturnera</taxon>
    </lineage>
</organism>
<proteinExistence type="inferred from homology"/>
<comment type="function">
    <text evidence="1">Catalyzes the oxidation of erythronate-4-phosphate to 3-hydroxy-2-oxo-4-phosphonooxybutanoate.</text>
</comment>
<comment type="catalytic activity">
    <reaction evidence="1">
        <text>4-phospho-D-erythronate + NAD(+) = (R)-3-hydroxy-2-oxo-4-phosphooxybutanoate + NADH + H(+)</text>
        <dbReference type="Rhea" id="RHEA:18829"/>
        <dbReference type="ChEBI" id="CHEBI:15378"/>
        <dbReference type="ChEBI" id="CHEBI:57540"/>
        <dbReference type="ChEBI" id="CHEBI:57945"/>
        <dbReference type="ChEBI" id="CHEBI:58538"/>
        <dbReference type="ChEBI" id="CHEBI:58766"/>
        <dbReference type="EC" id="1.1.1.290"/>
    </reaction>
</comment>
<comment type="pathway">
    <text evidence="1">Cofactor biosynthesis; pyridoxine 5'-phosphate biosynthesis; pyridoxine 5'-phosphate from D-erythrose 4-phosphate: step 2/5.</text>
</comment>
<comment type="subunit">
    <text evidence="1">Homodimer.</text>
</comment>
<comment type="subcellular location">
    <subcellularLocation>
        <location evidence="1">Cytoplasm</location>
    </subcellularLocation>
</comment>
<comment type="similarity">
    <text evidence="1">Belongs to the D-isomer specific 2-hydroxyacid dehydrogenase family. PdxB subfamily.</text>
</comment>
<evidence type="ECO:0000255" key="1">
    <source>
        <dbReference type="HAMAP-Rule" id="MF_01825"/>
    </source>
</evidence>
<keyword id="KW-0963">Cytoplasm</keyword>
<keyword id="KW-0520">NAD</keyword>
<keyword id="KW-0560">Oxidoreductase</keyword>
<keyword id="KW-0664">Pyridoxine biosynthesis</keyword>
<gene>
    <name evidence="1" type="primary">pdxB</name>
    <name type="ordered locus">Rmag_0684</name>
</gene>
<reference key="1">
    <citation type="journal article" date="2007" name="Science">
        <title>The Calyptogena magnifica chemoautotrophic symbiont genome.</title>
        <authorList>
            <person name="Newton I.L.G."/>
            <person name="Woyke T."/>
            <person name="Auchtung T.A."/>
            <person name="Dilly G.F."/>
            <person name="Dutton R.J."/>
            <person name="Fisher M.C."/>
            <person name="Fontanez K.M."/>
            <person name="Lau E."/>
            <person name="Stewart F.J."/>
            <person name="Richardson P.M."/>
            <person name="Barry K.W."/>
            <person name="Saunders E."/>
            <person name="Detter J.C."/>
            <person name="Wu D."/>
            <person name="Eisen J.A."/>
            <person name="Cavanaugh C.M."/>
        </authorList>
    </citation>
    <scope>NUCLEOTIDE SEQUENCE [LARGE SCALE GENOMIC DNA]</scope>
</reference>
<name>PDXB_RUTMC</name>
<accession>A1AWW7</accession>
<protein>
    <recommendedName>
        <fullName evidence="1">Erythronate-4-phosphate dehydrogenase</fullName>
        <ecNumber evidence="1">1.1.1.290</ecNumber>
    </recommendedName>
</protein>